<organism>
    <name type="scientific">Emericella nidulans (strain FGSC A4 / ATCC 38163 / CBS 112.46 / NRRL 194 / M139)</name>
    <name type="common">Aspergillus nidulans</name>
    <dbReference type="NCBI Taxonomy" id="227321"/>
    <lineage>
        <taxon>Eukaryota</taxon>
        <taxon>Fungi</taxon>
        <taxon>Dikarya</taxon>
        <taxon>Ascomycota</taxon>
        <taxon>Pezizomycotina</taxon>
        <taxon>Eurotiomycetes</taxon>
        <taxon>Eurotiomycetidae</taxon>
        <taxon>Eurotiales</taxon>
        <taxon>Aspergillaceae</taxon>
        <taxon>Aspergillus</taxon>
        <taxon>Aspergillus subgen. Nidulantes</taxon>
    </lineage>
</organism>
<comment type="function">
    <text evidence="1">Component of the FACT complex, a general chromatin factor that acts to reorganize nucleosomes. The FACT complex is involved in multiple processes that require DNA as a template such as mRNA elongation, DNA replication and DNA repair. During transcription elongation the FACT complex acts as a histone chaperone that both destabilizes and restores nucleosomal structure. It facilitates the passage of RNA polymerase II and transcription by promoting the dissociation of one histone H2A-H2B dimer from the nucleosome, then subsequently promotes the reestablishment of the nucleosome following the passage of RNA polymerase II (By similarity).</text>
</comment>
<comment type="subunit">
    <text evidence="1">Forms a stable heterodimer with spt16. The spt16-pob3 dimer weakly associates with multiple molecules of nhp6 to form the FACT complex (By similarity).</text>
</comment>
<comment type="subcellular location">
    <subcellularLocation>
        <location evidence="2">Nucleus</location>
    </subcellularLocation>
    <subcellularLocation>
        <location evidence="2">Chromosome</location>
    </subcellularLocation>
    <text evidence="2">Colocalizes with RNA polymerase II on chromatin. Recruited to actively transcribed loci.</text>
</comment>
<comment type="miscellaneous">
    <text>In contrast to the orthologous protein in animals and plants, this protein does not contain a HMG box DNA-binding domain. This function may instead be provided by the HMG box of the associated nhp6 protein in the FACT complex of fungi.</text>
</comment>
<comment type="similarity">
    <text evidence="4">Belongs to the SSRP1 family.</text>
</comment>
<comment type="sequence caution" evidence="4">
    <conflict type="erroneous gene model prediction">
        <sequence resource="EMBL-CDS" id="EAA57630"/>
    </conflict>
</comment>
<name>POB3_EMENI</name>
<sequence length="575" mass="63848">MESFDNIYLDLSNQPGKCKLAETGLGWRPSGGGDTFTLDSSNIGAAQWSRAAKGYELKILSRSSGVIQLDGFDQEDFERLSKAFKIWYGINVESREHALRGWNWGKAEFTKAELAFNVQNRPAFEVPYSEISNTNLAGKNEVAVELSLSVDPNGSKPAGSTKNRGRKAAAGPDELVEMRFYIPGTAVKTENGIKGENADEKNGGEGEENGEEQNAANLFYELLMEKAEIGDVAGDTFATFLDVLHLTPRGRFDIDMYESSFRLRGKTYDYKIQYSSIKKFFLLPKNDDTHTLIVLGLEPPLRQGQTRYPFLVMQLKLDEEISLELNMTEELLETRYKDKLEPRYEEPIHQVITKIFRGLSGKKVIMPSKDFVSHHGHSGVKCSIKANEGLLYFLDKSLIFVPKPATYIQMENVAVVTMSRVGGAISASRTFDITVSLKAGMGEHQFSNINREEQQPLEEFFKAKNIRIKNEMSDDTNALIAAALDNDDMMSSDEDGGGRPDRGSADEDEESVDEDFQADSDSDVAEEYDSAHESSGSGSDAEMDDASDAGVDEDEDADADMSEEERPKKKSKTGK</sequence>
<evidence type="ECO:0000250" key="1"/>
<evidence type="ECO:0000250" key="2">
    <source>
        <dbReference type="UniProtKB" id="Q04636"/>
    </source>
</evidence>
<evidence type="ECO:0000256" key="3">
    <source>
        <dbReference type="SAM" id="MobiDB-lite"/>
    </source>
</evidence>
<evidence type="ECO:0000305" key="4"/>
<reference key="1">
    <citation type="journal article" date="2005" name="Nature">
        <title>Sequencing of Aspergillus nidulans and comparative analysis with A. fumigatus and A. oryzae.</title>
        <authorList>
            <person name="Galagan J.E."/>
            <person name="Calvo S.E."/>
            <person name="Cuomo C."/>
            <person name="Ma L.-J."/>
            <person name="Wortman J.R."/>
            <person name="Batzoglou S."/>
            <person name="Lee S.-I."/>
            <person name="Bastuerkmen M."/>
            <person name="Spevak C.C."/>
            <person name="Clutterbuck J."/>
            <person name="Kapitonov V."/>
            <person name="Jurka J."/>
            <person name="Scazzocchio C."/>
            <person name="Farman M.L."/>
            <person name="Butler J."/>
            <person name="Purcell S."/>
            <person name="Harris S."/>
            <person name="Braus G.H."/>
            <person name="Draht O."/>
            <person name="Busch S."/>
            <person name="D'Enfert C."/>
            <person name="Bouchier C."/>
            <person name="Goldman G.H."/>
            <person name="Bell-Pedersen D."/>
            <person name="Griffiths-Jones S."/>
            <person name="Doonan J.H."/>
            <person name="Yu J."/>
            <person name="Vienken K."/>
            <person name="Pain A."/>
            <person name="Freitag M."/>
            <person name="Selker E.U."/>
            <person name="Archer D.B."/>
            <person name="Penalva M.A."/>
            <person name="Oakley B.R."/>
            <person name="Momany M."/>
            <person name="Tanaka T."/>
            <person name="Kumagai T."/>
            <person name="Asai K."/>
            <person name="Machida M."/>
            <person name="Nierman W.C."/>
            <person name="Denning D.W."/>
            <person name="Caddick M.X."/>
            <person name="Hynes M."/>
            <person name="Paoletti M."/>
            <person name="Fischer R."/>
            <person name="Miller B.L."/>
            <person name="Dyer P.S."/>
            <person name="Sachs M.S."/>
            <person name="Osmani S.A."/>
            <person name="Birren B.W."/>
        </authorList>
    </citation>
    <scope>NUCLEOTIDE SEQUENCE [LARGE SCALE GENOMIC DNA]</scope>
    <source>
        <strain>FGSC A4 / ATCC 38163 / CBS 112.46 / NRRL 194 / M139</strain>
    </source>
</reference>
<reference key="2">
    <citation type="journal article" date="2009" name="Fungal Genet. Biol.">
        <title>The 2008 update of the Aspergillus nidulans genome annotation: a community effort.</title>
        <authorList>
            <person name="Wortman J.R."/>
            <person name="Gilsenan J.M."/>
            <person name="Joardar V."/>
            <person name="Deegan J."/>
            <person name="Clutterbuck J."/>
            <person name="Andersen M.R."/>
            <person name="Archer D."/>
            <person name="Bencina M."/>
            <person name="Braus G."/>
            <person name="Coutinho P."/>
            <person name="von Dohren H."/>
            <person name="Doonan J."/>
            <person name="Driessen A.J."/>
            <person name="Durek P."/>
            <person name="Espeso E."/>
            <person name="Fekete E."/>
            <person name="Flipphi M."/>
            <person name="Estrada C.G."/>
            <person name="Geysens S."/>
            <person name="Goldman G."/>
            <person name="de Groot P.W."/>
            <person name="Hansen K."/>
            <person name="Harris S.D."/>
            <person name="Heinekamp T."/>
            <person name="Helmstaedt K."/>
            <person name="Henrissat B."/>
            <person name="Hofmann G."/>
            <person name="Homan T."/>
            <person name="Horio T."/>
            <person name="Horiuchi H."/>
            <person name="James S."/>
            <person name="Jones M."/>
            <person name="Karaffa L."/>
            <person name="Karanyi Z."/>
            <person name="Kato M."/>
            <person name="Keller N."/>
            <person name="Kelly D.E."/>
            <person name="Kiel J.A."/>
            <person name="Kim J.M."/>
            <person name="van der Klei I.J."/>
            <person name="Klis F.M."/>
            <person name="Kovalchuk A."/>
            <person name="Krasevec N."/>
            <person name="Kubicek C.P."/>
            <person name="Liu B."/>
            <person name="Maccabe A."/>
            <person name="Meyer V."/>
            <person name="Mirabito P."/>
            <person name="Miskei M."/>
            <person name="Mos M."/>
            <person name="Mullins J."/>
            <person name="Nelson D.R."/>
            <person name="Nielsen J."/>
            <person name="Oakley B.R."/>
            <person name="Osmani S.A."/>
            <person name="Pakula T."/>
            <person name="Paszewski A."/>
            <person name="Paulsen I."/>
            <person name="Pilsyk S."/>
            <person name="Pocsi I."/>
            <person name="Punt P.J."/>
            <person name="Ram A.F."/>
            <person name="Ren Q."/>
            <person name="Robellet X."/>
            <person name="Robson G."/>
            <person name="Seiboth B."/>
            <person name="van Solingen P."/>
            <person name="Specht T."/>
            <person name="Sun J."/>
            <person name="Taheri-Talesh N."/>
            <person name="Takeshita N."/>
            <person name="Ussery D."/>
            <person name="vanKuyk P.A."/>
            <person name="Visser H."/>
            <person name="van de Vondervoort P.J."/>
            <person name="de Vries R.P."/>
            <person name="Walton J."/>
            <person name="Xiang X."/>
            <person name="Xiong Y."/>
            <person name="Zeng A.P."/>
            <person name="Brandt B.W."/>
            <person name="Cornell M.J."/>
            <person name="van den Hondel C.A."/>
            <person name="Visser J."/>
            <person name="Oliver S.G."/>
            <person name="Turner G."/>
        </authorList>
    </citation>
    <scope>GENOME REANNOTATION</scope>
    <source>
        <strain>FGSC A4 / ATCC 38163 / CBS 112.46 / NRRL 194 / M139</strain>
    </source>
</reference>
<proteinExistence type="inferred from homology"/>
<accession>Q5AYE3</accession>
<accession>C8V1M2</accession>
<keyword id="KW-0158">Chromosome</keyword>
<keyword id="KW-0227">DNA damage</keyword>
<keyword id="KW-0234">DNA repair</keyword>
<keyword id="KW-0235">DNA replication</keyword>
<keyword id="KW-0539">Nucleus</keyword>
<keyword id="KW-1185">Reference proteome</keyword>
<keyword id="KW-0804">Transcription</keyword>
<keyword id="KW-0805">Transcription regulation</keyword>
<gene>
    <name type="primary">pob3</name>
    <name type="ORF">AN6687</name>
</gene>
<feature type="chain" id="PRO_0000245206" description="FACT complex subunit pob3">
    <location>
        <begin position="1"/>
        <end position="575"/>
    </location>
</feature>
<feature type="region of interest" description="Disordered" evidence="3">
    <location>
        <begin position="148"/>
        <end position="169"/>
    </location>
</feature>
<feature type="region of interest" description="Disordered" evidence="3">
    <location>
        <begin position="191"/>
        <end position="211"/>
    </location>
</feature>
<feature type="region of interest" description="Disordered" evidence="3">
    <location>
        <begin position="484"/>
        <end position="575"/>
    </location>
</feature>
<feature type="compositionally biased region" description="Basic and acidic residues" evidence="3">
    <location>
        <begin position="191"/>
        <end position="204"/>
    </location>
</feature>
<feature type="compositionally biased region" description="Acidic residues" evidence="3">
    <location>
        <begin position="485"/>
        <end position="495"/>
    </location>
</feature>
<feature type="compositionally biased region" description="Basic and acidic residues" evidence="3">
    <location>
        <begin position="496"/>
        <end position="505"/>
    </location>
</feature>
<feature type="compositionally biased region" description="Acidic residues" evidence="3">
    <location>
        <begin position="506"/>
        <end position="528"/>
    </location>
</feature>
<feature type="compositionally biased region" description="Acidic residues" evidence="3">
    <location>
        <begin position="541"/>
        <end position="563"/>
    </location>
</feature>
<protein>
    <recommendedName>
        <fullName>FACT complex subunit pob3</fullName>
    </recommendedName>
    <alternativeName>
        <fullName>Facilitates chromatin transcription complex subunit pob3</fullName>
    </alternativeName>
</protein>
<dbReference type="EMBL" id="AACD01000111">
    <property type="protein sequence ID" value="EAA57630.1"/>
    <property type="status" value="ALT_SEQ"/>
    <property type="molecule type" value="Genomic_DNA"/>
</dbReference>
<dbReference type="EMBL" id="BN001301">
    <property type="protein sequence ID" value="CBF71249.1"/>
    <property type="molecule type" value="Genomic_DNA"/>
</dbReference>
<dbReference type="RefSeq" id="XP_664291.1">
    <property type="nucleotide sequence ID" value="XM_659199.1"/>
</dbReference>
<dbReference type="SMR" id="Q5AYE3"/>
<dbReference type="FunCoup" id="Q5AYE3">
    <property type="interactions" value="1001"/>
</dbReference>
<dbReference type="STRING" id="227321.Q5AYE3"/>
<dbReference type="EnsemblFungi" id="CBF71249">
    <property type="protein sequence ID" value="CBF71249"/>
    <property type="gene ID" value="ANIA_06687"/>
</dbReference>
<dbReference type="VEuPathDB" id="FungiDB:AN6687"/>
<dbReference type="eggNOG" id="KOG0526">
    <property type="taxonomic scope" value="Eukaryota"/>
</dbReference>
<dbReference type="HOGENOM" id="CLU_017374_3_0_1"/>
<dbReference type="InParanoid" id="Q5AYE3"/>
<dbReference type="OMA" id="QVVTKIF"/>
<dbReference type="OrthoDB" id="498543at2759"/>
<dbReference type="Proteomes" id="UP000000560">
    <property type="component" value="Chromosome I"/>
</dbReference>
<dbReference type="GO" id="GO:0000781">
    <property type="term" value="C:chromosome, telomeric region"/>
    <property type="evidence" value="ECO:0007669"/>
    <property type="project" value="GOC"/>
</dbReference>
<dbReference type="GO" id="GO:0035101">
    <property type="term" value="C:FACT complex"/>
    <property type="evidence" value="ECO:0000318"/>
    <property type="project" value="GO_Central"/>
</dbReference>
<dbReference type="GO" id="GO:0003677">
    <property type="term" value="F:DNA binding"/>
    <property type="evidence" value="ECO:0007669"/>
    <property type="project" value="InterPro"/>
</dbReference>
<dbReference type="GO" id="GO:0042393">
    <property type="term" value="F:histone binding"/>
    <property type="evidence" value="ECO:0000318"/>
    <property type="project" value="GO_Central"/>
</dbReference>
<dbReference type="GO" id="GO:0031491">
    <property type="term" value="F:nucleosome binding"/>
    <property type="evidence" value="ECO:0000318"/>
    <property type="project" value="GO_Central"/>
</dbReference>
<dbReference type="GO" id="GO:0006281">
    <property type="term" value="P:DNA repair"/>
    <property type="evidence" value="ECO:0007669"/>
    <property type="project" value="UniProtKB-KW"/>
</dbReference>
<dbReference type="GO" id="GO:0006335">
    <property type="term" value="P:DNA replication-dependent chromatin assembly"/>
    <property type="evidence" value="ECO:0007669"/>
    <property type="project" value="EnsemblFungi"/>
</dbReference>
<dbReference type="GO" id="GO:0006261">
    <property type="term" value="P:DNA-templated DNA replication"/>
    <property type="evidence" value="ECO:0007669"/>
    <property type="project" value="EnsemblFungi"/>
</dbReference>
<dbReference type="GO" id="GO:0034728">
    <property type="term" value="P:nucleosome organization"/>
    <property type="evidence" value="ECO:0007669"/>
    <property type="project" value="EnsemblFungi"/>
</dbReference>
<dbReference type="GO" id="GO:0031508">
    <property type="term" value="P:pericentric heterochromatin formation"/>
    <property type="evidence" value="ECO:0007669"/>
    <property type="project" value="EnsemblFungi"/>
</dbReference>
<dbReference type="GO" id="GO:0045899">
    <property type="term" value="P:positive regulation of RNA polymerase II transcription preinitiation complex assembly"/>
    <property type="evidence" value="ECO:0007669"/>
    <property type="project" value="EnsemblFungi"/>
</dbReference>
<dbReference type="GO" id="GO:0030466">
    <property type="term" value="P:silent mating-type cassette heterochromatin formation"/>
    <property type="evidence" value="ECO:0007669"/>
    <property type="project" value="EnsemblFungi"/>
</dbReference>
<dbReference type="GO" id="GO:0031509">
    <property type="term" value="P:subtelomeric heterochromatin formation"/>
    <property type="evidence" value="ECO:0007669"/>
    <property type="project" value="EnsemblFungi"/>
</dbReference>
<dbReference type="CDD" id="cd13230">
    <property type="entry name" value="PH1_SSRP1-like"/>
    <property type="match status" value="1"/>
</dbReference>
<dbReference type="CDD" id="cd13231">
    <property type="entry name" value="PH2_SSRP1-like"/>
    <property type="match status" value="1"/>
</dbReference>
<dbReference type="CDD" id="cd13229">
    <property type="entry name" value="PH_TFIIH"/>
    <property type="match status" value="1"/>
</dbReference>
<dbReference type="FunFam" id="2.30.29.220:FF:000003">
    <property type="entry name" value="FACT complex subunit POB3"/>
    <property type="match status" value="1"/>
</dbReference>
<dbReference type="FunFam" id="2.30.29.30:FF:000146">
    <property type="entry name" value="FACT complex subunit POB3"/>
    <property type="match status" value="1"/>
</dbReference>
<dbReference type="FunFam" id="2.30.29.30:FF:000310">
    <property type="entry name" value="FACT complex subunit POB3"/>
    <property type="match status" value="1"/>
</dbReference>
<dbReference type="FunFam" id="2.30.29.150:FF:000001">
    <property type="entry name" value="Fact complex subunit ssrp1"/>
    <property type="match status" value="1"/>
</dbReference>
<dbReference type="Gene3D" id="2.30.29.150">
    <property type="match status" value="1"/>
</dbReference>
<dbReference type="Gene3D" id="2.30.29.30">
    <property type="entry name" value="Pleckstrin-homology domain (PH domain)/Phosphotyrosine-binding domain (PTB)"/>
    <property type="match status" value="2"/>
</dbReference>
<dbReference type="Gene3D" id="2.30.29.220">
    <property type="entry name" value="Structure-specific recognition protein (SSRP1)"/>
    <property type="match status" value="1"/>
</dbReference>
<dbReference type="InterPro" id="IPR011993">
    <property type="entry name" value="PH-like_dom_sf"/>
</dbReference>
<dbReference type="InterPro" id="IPR013719">
    <property type="entry name" value="RTT106/SPT16-like_middle_dom"/>
</dbReference>
<dbReference type="InterPro" id="IPR050454">
    <property type="entry name" value="RTT106/SSRP1_HistChap/FACT"/>
</dbReference>
<dbReference type="InterPro" id="IPR048993">
    <property type="entry name" value="SSRP1-like_PH1"/>
</dbReference>
<dbReference type="InterPro" id="IPR000969">
    <property type="entry name" value="SSRP1/POB3"/>
</dbReference>
<dbReference type="InterPro" id="IPR035417">
    <property type="entry name" value="SSRP1/POB3_N"/>
</dbReference>
<dbReference type="InterPro" id="IPR024954">
    <property type="entry name" value="SSRP1_DD"/>
</dbReference>
<dbReference type="InterPro" id="IPR038167">
    <property type="entry name" value="SSRP1_sf"/>
</dbReference>
<dbReference type="PANTHER" id="PTHR45849">
    <property type="entry name" value="FACT COMPLEX SUBUNIT SSRP1"/>
    <property type="match status" value="1"/>
</dbReference>
<dbReference type="PANTHER" id="PTHR45849:SF1">
    <property type="entry name" value="FACT COMPLEX SUBUNIT SSRP1"/>
    <property type="match status" value="1"/>
</dbReference>
<dbReference type="Pfam" id="PF21103">
    <property type="entry name" value="PH1_SSRP1-like"/>
    <property type="match status" value="1"/>
</dbReference>
<dbReference type="Pfam" id="PF17292">
    <property type="entry name" value="POB3_N"/>
    <property type="match status" value="1"/>
</dbReference>
<dbReference type="Pfam" id="PF08512">
    <property type="entry name" value="Rttp106-like_middle"/>
    <property type="match status" value="1"/>
</dbReference>
<dbReference type="Pfam" id="PF03531">
    <property type="entry name" value="SSrecog"/>
    <property type="match status" value="1"/>
</dbReference>
<dbReference type="PRINTS" id="PR00887">
    <property type="entry name" value="SSRCOGNITION"/>
</dbReference>
<dbReference type="SMART" id="SM01287">
    <property type="entry name" value="Rtt106"/>
    <property type="match status" value="1"/>
</dbReference>
<dbReference type="SUPFAM" id="SSF50729">
    <property type="entry name" value="PH domain-like"/>
    <property type="match status" value="1"/>
</dbReference>